<reference key="1">
    <citation type="submission" date="2008-07" db="EMBL/GenBank/DDBJ databases">
        <title>Complete sequence of Geobacter bemidjiensis BEM.</title>
        <authorList>
            <consortium name="US DOE Joint Genome Institute"/>
            <person name="Lucas S."/>
            <person name="Copeland A."/>
            <person name="Lapidus A."/>
            <person name="Glavina del Rio T."/>
            <person name="Dalin E."/>
            <person name="Tice H."/>
            <person name="Bruce D."/>
            <person name="Goodwin L."/>
            <person name="Pitluck S."/>
            <person name="Kiss H."/>
            <person name="Brettin T."/>
            <person name="Detter J.C."/>
            <person name="Han C."/>
            <person name="Kuske C.R."/>
            <person name="Schmutz J."/>
            <person name="Larimer F."/>
            <person name="Land M."/>
            <person name="Hauser L."/>
            <person name="Kyrpides N."/>
            <person name="Lykidis A."/>
            <person name="Lovley D."/>
            <person name="Richardson P."/>
        </authorList>
    </citation>
    <scope>NUCLEOTIDE SEQUENCE [LARGE SCALE GENOMIC DNA]</scope>
    <source>
        <strain>ATCC BAA-1014 / DSM 16622 / JCM 12645 / Bem</strain>
    </source>
</reference>
<keyword id="KW-0028">Amino-acid biosynthesis</keyword>
<keyword id="KW-0057">Aromatic amino acid biosynthesis</keyword>
<keyword id="KW-0170">Cobalt</keyword>
<keyword id="KW-0963">Cytoplasm</keyword>
<keyword id="KW-0456">Lyase</keyword>
<keyword id="KW-0479">Metal-binding</keyword>
<keyword id="KW-0520">NAD</keyword>
<keyword id="KW-0547">Nucleotide-binding</keyword>
<keyword id="KW-1185">Reference proteome</keyword>
<keyword id="KW-0862">Zinc</keyword>
<feature type="chain" id="PRO_1000094524" description="3-dehydroquinate synthase">
    <location>
        <begin position="1"/>
        <end position="362"/>
    </location>
</feature>
<feature type="binding site" evidence="1">
    <location>
        <begin position="74"/>
        <end position="79"/>
    </location>
    <ligand>
        <name>NAD(+)</name>
        <dbReference type="ChEBI" id="CHEBI:57540"/>
    </ligand>
</feature>
<feature type="binding site" evidence="1">
    <location>
        <begin position="108"/>
        <end position="112"/>
    </location>
    <ligand>
        <name>NAD(+)</name>
        <dbReference type="ChEBI" id="CHEBI:57540"/>
    </ligand>
</feature>
<feature type="binding site" evidence="1">
    <location>
        <begin position="132"/>
        <end position="133"/>
    </location>
    <ligand>
        <name>NAD(+)</name>
        <dbReference type="ChEBI" id="CHEBI:57540"/>
    </ligand>
</feature>
<feature type="binding site" evidence="1">
    <location>
        <position position="145"/>
    </location>
    <ligand>
        <name>NAD(+)</name>
        <dbReference type="ChEBI" id="CHEBI:57540"/>
    </ligand>
</feature>
<feature type="binding site" evidence="1">
    <location>
        <position position="154"/>
    </location>
    <ligand>
        <name>NAD(+)</name>
        <dbReference type="ChEBI" id="CHEBI:57540"/>
    </ligand>
</feature>
<feature type="binding site" evidence="1">
    <location>
        <begin position="172"/>
        <end position="175"/>
    </location>
    <ligand>
        <name>NAD(+)</name>
        <dbReference type="ChEBI" id="CHEBI:57540"/>
    </ligand>
</feature>
<feature type="binding site" evidence="1">
    <location>
        <position position="187"/>
    </location>
    <ligand>
        <name>Zn(2+)</name>
        <dbReference type="ChEBI" id="CHEBI:29105"/>
    </ligand>
</feature>
<feature type="binding site" evidence="1">
    <location>
        <position position="250"/>
    </location>
    <ligand>
        <name>Zn(2+)</name>
        <dbReference type="ChEBI" id="CHEBI:29105"/>
    </ligand>
</feature>
<feature type="binding site" evidence="1">
    <location>
        <position position="267"/>
    </location>
    <ligand>
        <name>Zn(2+)</name>
        <dbReference type="ChEBI" id="CHEBI:29105"/>
    </ligand>
</feature>
<organism>
    <name type="scientific">Citrifermentans bemidjiense (strain ATCC BAA-1014 / DSM 16622 / JCM 12645 / Bem)</name>
    <name type="common">Geobacter bemidjiensis</name>
    <dbReference type="NCBI Taxonomy" id="404380"/>
    <lineage>
        <taxon>Bacteria</taxon>
        <taxon>Pseudomonadati</taxon>
        <taxon>Thermodesulfobacteriota</taxon>
        <taxon>Desulfuromonadia</taxon>
        <taxon>Geobacterales</taxon>
        <taxon>Geobacteraceae</taxon>
        <taxon>Citrifermentans</taxon>
    </lineage>
</organism>
<accession>B5E8I9</accession>
<protein>
    <recommendedName>
        <fullName evidence="1">3-dehydroquinate synthase</fullName>
        <shortName evidence="1">DHQS</shortName>
        <ecNumber evidence="1">4.2.3.4</ecNumber>
    </recommendedName>
</protein>
<dbReference type="EC" id="4.2.3.4" evidence="1"/>
<dbReference type="EMBL" id="CP001124">
    <property type="protein sequence ID" value="ACH38574.1"/>
    <property type="molecule type" value="Genomic_DNA"/>
</dbReference>
<dbReference type="RefSeq" id="WP_012529990.1">
    <property type="nucleotide sequence ID" value="NC_011146.1"/>
</dbReference>
<dbReference type="SMR" id="B5E8I9"/>
<dbReference type="STRING" id="404380.Gbem_1556"/>
<dbReference type="KEGG" id="gbm:Gbem_1556"/>
<dbReference type="eggNOG" id="COG0337">
    <property type="taxonomic scope" value="Bacteria"/>
</dbReference>
<dbReference type="HOGENOM" id="CLU_001201_0_2_7"/>
<dbReference type="OrthoDB" id="9806583at2"/>
<dbReference type="UniPathway" id="UPA00053">
    <property type="reaction ID" value="UER00085"/>
</dbReference>
<dbReference type="Proteomes" id="UP000008825">
    <property type="component" value="Chromosome"/>
</dbReference>
<dbReference type="GO" id="GO:0005737">
    <property type="term" value="C:cytoplasm"/>
    <property type="evidence" value="ECO:0007669"/>
    <property type="project" value="UniProtKB-SubCell"/>
</dbReference>
<dbReference type="GO" id="GO:0003856">
    <property type="term" value="F:3-dehydroquinate synthase activity"/>
    <property type="evidence" value="ECO:0007669"/>
    <property type="project" value="UniProtKB-UniRule"/>
</dbReference>
<dbReference type="GO" id="GO:0046872">
    <property type="term" value="F:metal ion binding"/>
    <property type="evidence" value="ECO:0007669"/>
    <property type="project" value="UniProtKB-KW"/>
</dbReference>
<dbReference type="GO" id="GO:0000166">
    <property type="term" value="F:nucleotide binding"/>
    <property type="evidence" value="ECO:0007669"/>
    <property type="project" value="UniProtKB-KW"/>
</dbReference>
<dbReference type="GO" id="GO:0008652">
    <property type="term" value="P:amino acid biosynthetic process"/>
    <property type="evidence" value="ECO:0007669"/>
    <property type="project" value="UniProtKB-KW"/>
</dbReference>
<dbReference type="GO" id="GO:0009073">
    <property type="term" value="P:aromatic amino acid family biosynthetic process"/>
    <property type="evidence" value="ECO:0007669"/>
    <property type="project" value="UniProtKB-KW"/>
</dbReference>
<dbReference type="GO" id="GO:0009423">
    <property type="term" value="P:chorismate biosynthetic process"/>
    <property type="evidence" value="ECO:0007669"/>
    <property type="project" value="UniProtKB-UniRule"/>
</dbReference>
<dbReference type="CDD" id="cd08195">
    <property type="entry name" value="DHQS"/>
    <property type="match status" value="1"/>
</dbReference>
<dbReference type="FunFam" id="3.40.50.1970:FF:000001">
    <property type="entry name" value="3-dehydroquinate synthase"/>
    <property type="match status" value="1"/>
</dbReference>
<dbReference type="Gene3D" id="3.40.50.1970">
    <property type="match status" value="1"/>
</dbReference>
<dbReference type="Gene3D" id="1.20.1090.10">
    <property type="entry name" value="Dehydroquinate synthase-like - alpha domain"/>
    <property type="match status" value="1"/>
</dbReference>
<dbReference type="HAMAP" id="MF_00110">
    <property type="entry name" value="DHQ_synthase"/>
    <property type="match status" value="1"/>
</dbReference>
<dbReference type="InterPro" id="IPR050071">
    <property type="entry name" value="Dehydroquinate_synthase"/>
</dbReference>
<dbReference type="InterPro" id="IPR016037">
    <property type="entry name" value="DHQ_synth_AroB"/>
</dbReference>
<dbReference type="InterPro" id="IPR030963">
    <property type="entry name" value="DHQ_synth_fam"/>
</dbReference>
<dbReference type="InterPro" id="IPR030960">
    <property type="entry name" value="DHQS/DOIS_N"/>
</dbReference>
<dbReference type="InterPro" id="IPR056179">
    <property type="entry name" value="DHQS_C"/>
</dbReference>
<dbReference type="NCBIfam" id="TIGR01357">
    <property type="entry name" value="aroB"/>
    <property type="match status" value="1"/>
</dbReference>
<dbReference type="PANTHER" id="PTHR43622">
    <property type="entry name" value="3-DEHYDROQUINATE SYNTHASE"/>
    <property type="match status" value="1"/>
</dbReference>
<dbReference type="PANTHER" id="PTHR43622:SF7">
    <property type="entry name" value="3-DEHYDROQUINATE SYNTHASE, CHLOROPLASTIC"/>
    <property type="match status" value="1"/>
</dbReference>
<dbReference type="Pfam" id="PF01761">
    <property type="entry name" value="DHQ_synthase"/>
    <property type="match status" value="1"/>
</dbReference>
<dbReference type="Pfam" id="PF24621">
    <property type="entry name" value="DHQS_C"/>
    <property type="match status" value="1"/>
</dbReference>
<dbReference type="PIRSF" id="PIRSF001455">
    <property type="entry name" value="DHQ_synth"/>
    <property type="match status" value="1"/>
</dbReference>
<dbReference type="SUPFAM" id="SSF56796">
    <property type="entry name" value="Dehydroquinate synthase-like"/>
    <property type="match status" value="1"/>
</dbReference>
<sequence>MIAEKIRVALDERSYDIEMGAGNLDRIGSLCREVGLSGTAAVVSNTTVAPLYYETVRLSMERAGYRVVPVTLPDGEGYKNSATLNLIYDGLVDASLDRGSFILALGGGVIGDMAGFAAASYLRGIPFVQIPTTLLSQVDSSVGGKTGINHPRGKNLIGAFYQPKAVLIDVATLDTLPKREFLSGLGEIVKYGAVLDGGFFDFLEKNAKLLLARDKEALIQAVSRSCAIKAKVVAEDEREGGVRAVLNYGHTLGHAVETLTGYTRYLHGEAVAIGMVQAARLSQHYGFCSQADRERIEALVVALGLPTELPSFPPQQYREALSHDKKVRDKGLLFICNQGIGAYRMERLTDLGALLEICGIGE</sequence>
<name>AROB_CITBB</name>
<evidence type="ECO:0000255" key="1">
    <source>
        <dbReference type="HAMAP-Rule" id="MF_00110"/>
    </source>
</evidence>
<gene>
    <name evidence="1" type="primary">aroB</name>
    <name type="ordered locus">Gbem_1556</name>
</gene>
<comment type="function">
    <text evidence="1">Catalyzes the conversion of 3-deoxy-D-arabino-heptulosonate 7-phosphate (DAHP) to dehydroquinate (DHQ).</text>
</comment>
<comment type="catalytic activity">
    <reaction evidence="1">
        <text>7-phospho-2-dehydro-3-deoxy-D-arabino-heptonate = 3-dehydroquinate + phosphate</text>
        <dbReference type="Rhea" id="RHEA:21968"/>
        <dbReference type="ChEBI" id="CHEBI:32364"/>
        <dbReference type="ChEBI" id="CHEBI:43474"/>
        <dbReference type="ChEBI" id="CHEBI:58394"/>
        <dbReference type="EC" id="4.2.3.4"/>
    </reaction>
</comment>
<comment type="cofactor">
    <cofactor evidence="1">
        <name>Co(2+)</name>
        <dbReference type="ChEBI" id="CHEBI:48828"/>
    </cofactor>
    <cofactor evidence="1">
        <name>Zn(2+)</name>
        <dbReference type="ChEBI" id="CHEBI:29105"/>
    </cofactor>
    <text evidence="1">Binds 1 divalent metal cation per subunit. Can use either Co(2+) or Zn(2+).</text>
</comment>
<comment type="cofactor">
    <cofactor evidence="1">
        <name>NAD(+)</name>
        <dbReference type="ChEBI" id="CHEBI:57540"/>
    </cofactor>
</comment>
<comment type="pathway">
    <text evidence="1">Metabolic intermediate biosynthesis; chorismate biosynthesis; chorismate from D-erythrose 4-phosphate and phosphoenolpyruvate: step 2/7.</text>
</comment>
<comment type="subcellular location">
    <subcellularLocation>
        <location evidence="1">Cytoplasm</location>
    </subcellularLocation>
</comment>
<comment type="similarity">
    <text evidence="1">Belongs to the sugar phosphate cyclases superfamily. Dehydroquinate synthase family.</text>
</comment>
<proteinExistence type="inferred from homology"/>